<accession>C4V9J0</accession>
<feature type="chain" id="PRO_0000388404" description="Probable histidine--tRNA ligase, cytoplasmic">
    <location>
        <begin position="1"/>
        <end position="430"/>
    </location>
</feature>
<gene>
    <name type="ORF">NCER_101238</name>
</gene>
<sequence length="430" mass="49035">MSLKTPKGTTDLNPDDALVYEDLIDRTKNIFKLHGAVPIDTPVFELKSILLNKYGEDTKLIYDLKNNGGEECALRYDLTVPFSRYMSMNKLKKIKRYQIGKVYRRDQPSVVQGRWREFLQADFDIAGESLPMMADSELVCCMNRLLKTYNIGDFVIRVSDKRILYGIFEVCEIPNNLFATVSSSIDKLDKIAVNDINKELKLKGLTDKQIINLNIYIQKSGTVDVLDFLRENDVYKKCSEAVDDLCKLYEYCKIMKCSDHLIIDLSLARGLDYYTGMIIEGKYLNKNIGSVAGGGRYDNLIGSLENSSYTNTYNVPCAGFSIGLSRIFSCIQKPKVNTNVKVFISASGKLLLEERLKIQSILWEANISLETFYNKRNNPGEHKKYCVKHGIKYLIVVKEEQYNKGFVTVIEVNTNLENVIMIDNLPSHLQ</sequence>
<reference key="1">
    <citation type="journal article" date="2009" name="PLoS Pathog.">
        <title>Genomic analyses of the microsporidian Nosema ceranae, an emergent pathogen of honey bees.</title>
        <authorList>
            <person name="Cornman R.S."/>
            <person name="Chen Y.P."/>
            <person name="Schatz M.C."/>
            <person name="Street C."/>
            <person name="Zhao Y."/>
            <person name="Desany B."/>
            <person name="Egholm M."/>
            <person name="Hutchison S."/>
            <person name="Pettis J.S."/>
            <person name="Lipkin W.I."/>
            <person name="Evans J.D."/>
        </authorList>
    </citation>
    <scope>NUCLEOTIDE SEQUENCE [LARGE SCALE GENOMIC DNA]</scope>
    <source>
        <strain>BRL01</strain>
    </source>
</reference>
<evidence type="ECO:0000250" key="1"/>
<evidence type="ECO:0000305" key="2"/>
<organism>
    <name type="scientific">Vairimorpha ceranae (strain BRL01)</name>
    <name type="common">Microsporidian parasite</name>
    <name type="synonym">Nosema ceranae</name>
    <dbReference type="NCBI Taxonomy" id="578460"/>
    <lineage>
        <taxon>Eukaryota</taxon>
        <taxon>Fungi</taxon>
        <taxon>Fungi incertae sedis</taxon>
        <taxon>Microsporidia</taxon>
        <taxon>Nosematidae</taxon>
        <taxon>Vairimorpha</taxon>
    </lineage>
</organism>
<protein>
    <recommendedName>
        <fullName>Probable histidine--tRNA ligase, cytoplasmic</fullName>
        <ecNumber>6.1.1.21</ecNumber>
    </recommendedName>
    <alternativeName>
        <fullName>Histidyl-tRNA synthetase</fullName>
        <shortName>HisRS</shortName>
    </alternativeName>
</protein>
<name>SYHC_VAIC1</name>
<dbReference type="EC" id="6.1.1.21"/>
<dbReference type="EMBL" id="ACOL01000114">
    <property type="protein sequence ID" value="EEQ82106.1"/>
    <property type="molecule type" value="Genomic_DNA"/>
</dbReference>
<dbReference type="RefSeq" id="XP_002995777.1">
    <property type="nucleotide sequence ID" value="XM_002995731.1"/>
</dbReference>
<dbReference type="SMR" id="C4V9J0"/>
<dbReference type="FunCoup" id="C4V9J0">
    <property type="interactions" value="149"/>
</dbReference>
<dbReference type="STRING" id="578460.C4V9J0"/>
<dbReference type="KEGG" id="nce:NCER_101238"/>
<dbReference type="VEuPathDB" id="MicrosporidiaDB:NCER_101238"/>
<dbReference type="HOGENOM" id="CLU_025113_4_2_1"/>
<dbReference type="InParanoid" id="C4V9J0"/>
<dbReference type="OMA" id="YQIQKVW"/>
<dbReference type="OrthoDB" id="7811at6029"/>
<dbReference type="Proteomes" id="UP000009082">
    <property type="component" value="Unassembled WGS sequence"/>
</dbReference>
<dbReference type="GO" id="GO:0005829">
    <property type="term" value="C:cytosol"/>
    <property type="evidence" value="ECO:0007669"/>
    <property type="project" value="TreeGrafter"/>
</dbReference>
<dbReference type="GO" id="GO:0005739">
    <property type="term" value="C:mitochondrion"/>
    <property type="evidence" value="ECO:0007669"/>
    <property type="project" value="TreeGrafter"/>
</dbReference>
<dbReference type="GO" id="GO:0005524">
    <property type="term" value="F:ATP binding"/>
    <property type="evidence" value="ECO:0007669"/>
    <property type="project" value="UniProtKB-KW"/>
</dbReference>
<dbReference type="GO" id="GO:0004821">
    <property type="term" value="F:histidine-tRNA ligase activity"/>
    <property type="evidence" value="ECO:0007669"/>
    <property type="project" value="UniProtKB-EC"/>
</dbReference>
<dbReference type="GO" id="GO:0003723">
    <property type="term" value="F:RNA binding"/>
    <property type="evidence" value="ECO:0007669"/>
    <property type="project" value="TreeGrafter"/>
</dbReference>
<dbReference type="GO" id="GO:0006427">
    <property type="term" value="P:histidyl-tRNA aminoacylation"/>
    <property type="evidence" value="ECO:0007669"/>
    <property type="project" value="TreeGrafter"/>
</dbReference>
<dbReference type="GO" id="GO:0032543">
    <property type="term" value="P:mitochondrial translation"/>
    <property type="evidence" value="ECO:0007669"/>
    <property type="project" value="TreeGrafter"/>
</dbReference>
<dbReference type="CDD" id="cd00773">
    <property type="entry name" value="HisRS-like_core"/>
    <property type="match status" value="1"/>
</dbReference>
<dbReference type="Gene3D" id="3.40.50.800">
    <property type="entry name" value="Anticodon-binding domain"/>
    <property type="match status" value="1"/>
</dbReference>
<dbReference type="Gene3D" id="3.30.930.10">
    <property type="entry name" value="Bira Bifunctional Protein, Domain 2"/>
    <property type="match status" value="1"/>
</dbReference>
<dbReference type="InterPro" id="IPR045864">
    <property type="entry name" value="aa-tRNA-synth_II/BPL/LPL"/>
</dbReference>
<dbReference type="InterPro" id="IPR004154">
    <property type="entry name" value="Anticodon-bd"/>
</dbReference>
<dbReference type="InterPro" id="IPR036621">
    <property type="entry name" value="Anticodon-bd_dom_sf"/>
</dbReference>
<dbReference type="InterPro" id="IPR041715">
    <property type="entry name" value="HisRS-like_core"/>
</dbReference>
<dbReference type="InterPro" id="IPR004516">
    <property type="entry name" value="HisRS/HisZ"/>
</dbReference>
<dbReference type="PANTHER" id="PTHR11476:SF7">
    <property type="entry name" value="HISTIDINE--TRNA LIGASE"/>
    <property type="match status" value="1"/>
</dbReference>
<dbReference type="PANTHER" id="PTHR11476">
    <property type="entry name" value="HISTIDYL-TRNA SYNTHETASE"/>
    <property type="match status" value="1"/>
</dbReference>
<dbReference type="Pfam" id="PF03129">
    <property type="entry name" value="HGTP_anticodon"/>
    <property type="match status" value="1"/>
</dbReference>
<dbReference type="Pfam" id="PF13393">
    <property type="entry name" value="tRNA-synt_His"/>
    <property type="match status" value="1"/>
</dbReference>
<dbReference type="PIRSF" id="PIRSF001549">
    <property type="entry name" value="His-tRNA_synth"/>
    <property type="match status" value="1"/>
</dbReference>
<dbReference type="SUPFAM" id="SSF52954">
    <property type="entry name" value="Class II aaRS ABD-related"/>
    <property type="match status" value="1"/>
</dbReference>
<dbReference type="SUPFAM" id="SSF55681">
    <property type="entry name" value="Class II aaRS and biotin synthetases"/>
    <property type="match status" value="1"/>
</dbReference>
<comment type="catalytic activity">
    <reaction>
        <text>tRNA(His) + L-histidine + ATP = L-histidyl-tRNA(His) + AMP + diphosphate + H(+)</text>
        <dbReference type="Rhea" id="RHEA:17313"/>
        <dbReference type="Rhea" id="RHEA-COMP:9665"/>
        <dbReference type="Rhea" id="RHEA-COMP:9689"/>
        <dbReference type="ChEBI" id="CHEBI:15378"/>
        <dbReference type="ChEBI" id="CHEBI:30616"/>
        <dbReference type="ChEBI" id="CHEBI:33019"/>
        <dbReference type="ChEBI" id="CHEBI:57595"/>
        <dbReference type="ChEBI" id="CHEBI:78442"/>
        <dbReference type="ChEBI" id="CHEBI:78527"/>
        <dbReference type="ChEBI" id="CHEBI:456215"/>
        <dbReference type="EC" id="6.1.1.21"/>
    </reaction>
</comment>
<comment type="subcellular location">
    <subcellularLocation>
        <location evidence="1">Cytoplasm</location>
    </subcellularLocation>
</comment>
<comment type="similarity">
    <text evidence="2">Belongs to the class-II aminoacyl-tRNA synthetase family.</text>
</comment>
<proteinExistence type="inferred from homology"/>
<keyword id="KW-0030">Aminoacyl-tRNA synthetase</keyword>
<keyword id="KW-0067">ATP-binding</keyword>
<keyword id="KW-0963">Cytoplasm</keyword>
<keyword id="KW-0436">Ligase</keyword>
<keyword id="KW-0547">Nucleotide-binding</keyword>
<keyword id="KW-0648">Protein biosynthesis</keyword>
<keyword id="KW-1185">Reference proteome</keyword>